<accession>P45450</accession>
<accession>P74091</accession>
<gene>
    <name evidence="1" type="primary">murF</name>
    <name type="ordered locus">slr1351</name>
</gene>
<name>MURF_SYNY3</name>
<protein>
    <recommendedName>
        <fullName evidence="1">UDP-N-acetylmuramoyl-tripeptide--D-alanyl-D-alanine ligase</fullName>
        <ecNumber evidence="1">6.3.2.10</ecNumber>
    </recommendedName>
    <alternativeName>
        <fullName evidence="1">D-alanyl-D-alanine-adding enzyme</fullName>
    </alternativeName>
    <alternativeName>
        <fullName>UDP-MurNAc-pentapeptide synthetase</fullName>
    </alternativeName>
</protein>
<evidence type="ECO:0000255" key="1">
    <source>
        <dbReference type="HAMAP-Rule" id="MF_02019"/>
    </source>
</evidence>
<evidence type="ECO:0000305" key="2"/>
<reference key="1">
    <citation type="journal article" date="1995" name="Microbiology">
        <title>Characterization of the murF gene of the cyanobacterium Synechocystis sp. PCC 6803.</title>
        <authorList>
            <person name="Malakhov M.P."/>
            <person name="Los D.A."/>
            <person name="Wada H."/>
            <person name="Semenenko V.E."/>
            <person name="Murata N."/>
        </authorList>
    </citation>
    <scope>NUCLEOTIDE SEQUENCE [GENOMIC DNA]</scope>
</reference>
<reference key="2">
    <citation type="journal article" date="1996" name="DNA Res.">
        <title>Sequence analysis of the genome of the unicellular cyanobacterium Synechocystis sp. strain PCC6803. II. Sequence determination of the entire genome and assignment of potential protein-coding regions.</title>
        <authorList>
            <person name="Kaneko T."/>
            <person name="Sato S."/>
            <person name="Kotani H."/>
            <person name="Tanaka A."/>
            <person name="Asamizu E."/>
            <person name="Nakamura Y."/>
            <person name="Miyajima N."/>
            <person name="Hirosawa M."/>
            <person name="Sugiura M."/>
            <person name="Sasamoto S."/>
            <person name="Kimura T."/>
            <person name="Hosouchi T."/>
            <person name="Matsuno A."/>
            <person name="Muraki A."/>
            <person name="Nakazaki N."/>
            <person name="Naruo K."/>
            <person name="Okumura S."/>
            <person name="Shimpo S."/>
            <person name="Takeuchi C."/>
            <person name="Wada T."/>
            <person name="Watanabe A."/>
            <person name="Yamada M."/>
            <person name="Yasuda M."/>
            <person name="Tabata S."/>
        </authorList>
    </citation>
    <scope>NUCLEOTIDE SEQUENCE [LARGE SCALE GENOMIC DNA]</scope>
    <source>
        <strain>ATCC 27184 / PCC 6803 / Kazusa</strain>
    </source>
</reference>
<proteinExistence type="inferred from homology"/>
<organism>
    <name type="scientific">Synechocystis sp. (strain ATCC 27184 / PCC 6803 / Kazusa)</name>
    <dbReference type="NCBI Taxonomy" id="1111708"/>
    <lineage>
        <taxon>Bacteria</taxon>
        <taxon>Bacillati</taxon>
        <taxon>Cyanobacteriota</taxon>
        <taxon>Cyanophyceae</taxon>
        <taxon>Synechococcales</taxon>
        <taxon>Merismopediaceae</taxon>
        <taxon>Synechocystis</taxon>
    </lineage>
</organism>
<feature type="chain" id="PRO_0000101706" description="UDP-N-acetylmuramoyl-tripeptide--D-alanyl-D-alanine ligase">
    <location>
        <begin position="1"/>
        <end position="454"/>
    </location>
</feature>
<feature type="binding site" evidence="1">
    <location>
        <begin position="116"/>
        <end position="122"/>
    </location>
    <ligand>
        <name>ATP</name>
        <dbReference type="ChEBI" id="CHEBI:30616"/>
    </ligand>
</feature>
<feature type="sequence conflict" description="In Ref. 2; BAA18171." evidence="2" ref="2">
    <original>L</original>
    <variation>V</variation>
    <location>
        <position position="290"/>
    </location>
</feature>
<feature type="sequence conflict" description="In Ref. 2; BAA18171." evidence="2" ref="2">
    <original>D</original>
    <variation>A</variation>
    <location>
        <position position="332"/>
    </location>
</feature>
<dbReference type="EC" id="6.3.2.10" evidence="1"/>
<dbReference type="EMBL" id="X62437">
    <property type="protein sequence ID" value="CAA44303.1"/>
    <property type="molecule type" value="Genomic_DNA"/>
</dbReference>
<dbReference type="EMBL" id="BA000022">
    <property type="protein sequence ID" value="BAA18171.1"/>
    <property type="molecule type" value="Genomic_DNA"/>
</dbReference>
<dbReference type="PIR" id="S75610">
    <property type="entry name" value="S75610"/>
</dbReference>
<dbReference type="SMR" id="P45450"/>
<dbReference type="FunCoup" id="P45450">
    <property type="interactions" value="294"/>
</dbReference>
<dbReference type="IntAct" id="P45450">
    <property type="interactions" value="1"/>
</dbReference>
<dbReference type="STRING" id="1148.gene:10499044"/>
<dbReference type="PaxDb" id="1148-1653256"/>
<dbReference type="EnsemblBacteria" id="BAA18171">
    <property type="protein sequence ID" value="BAA18171"/>
    <property type="gene ID" value="BAA18171"/>
</dbReference>
<dbReference type="KEGG" id="syn:slr1351"/>
<dbReference type="eggNOG" id="COG0770">
    <property type="taxonomic scope" value="Bacteria"/>
</dbReference>
<dbReference type="InParanoid" id="P45450"/>
<dbReference type="PhylomeDB" id="P45450"/>
<dbReference type="UniPathway" id="UPA00219"/>
<dbReference type="Proteomes" id="UP000001425">
    <property type="component" value="Chromosome"/>
</dbReference>
<dbReference type="GO" id="GO:0005737">
    <property type="term" value="C:cytoplasm"/>
    <property type="evidence" value="ECO:0007669"/>
    <property type="project" value="UniProtKB-SubCell"/>
</dbReference>
<dbReference type="GO" id="GO:0005524">
    <property type="term" value="F:ATP binding"/>
    <property type="evidence" value="ECO:0007669"/>
    <property type="project" value="UniProtKB-UniRule"/>
</dbReference>
<dbReference type="GO" id="GO:0047480">
    <property type="term" value="F:UDP-N-acetylmuramoyl-tripeptide-D-alanyl-D-alanine ligase activity"/>
    <property type="evidence" value="ECO:0007669"/>
    <property type="project" value="UniProtKB-UniRule"/>
</dbReference>
<dbReference type="GO" id="GO:0008766">
    <property type="term" value="F:UDP-N-acetylmuramoylalanyl-D-glutamyl-2,6-diaminopimelate-D-alanyl-D-alanine ligase activity"/>
    <property type="evidence" value="ECO:0007669"/>
    <property type="project" value="RHEA"/>
</dbReference>
<dbReference type="GO" id="GO:0051301">
    <property type="term" value="P:cell division"/>
    <property type="evidence" value="ECO:0007669"/>
    <property type="project" value="UniProtKB-KW"/>
</dbReference>
<dbReference type="GO" id="GO:0071555">
    <property type="term" value="P:cell wall organization"/>
    <property type="evidence" value="ECO:0007669"/>
    <property type="project" value="UniProtKB-KW"/>
</dbReference>
<dbReference type="GO" id="GO:0009252">
    <property type="term" value="P:peptidoglycan biosynthetic process"/>
    <property type="evidence" value="ECO:0007669"/>
    <property type="project" value="UniProtKB-UniRule"/>
</dbReference>
<dbReference type="GO" id="GO:0008360">
    <property type="term" value="P:regulation of cell shape"/>
    <property type="evidence" value="ECO:0007669"/>
    <property type="project" value="UniProtKB-KW"/>
</dbReference>
<dbReference type="Gene3D" id="3.90.190.20">
    <property type="entry name" value="Mur ligase, C-terminal domain"/>
    <property type="match status" value="1"/>
</dbReference>
<dbReference type="Gene3D" id="3.40.1190.10">
    <property type="entry name" value="Mur-like, catalytic domain"/>
    <property type="match status" value="1"/>
</dbReference>
<dbReference type="Gene3D" id="3.40.1390.10">
    <property type="entry name" value="MurE/MurF, N-terminal domain"/>
    <property type="match status" value="1"/>
</dbReference>
<dbReference type="HAMAP" id="MF_02019">
    <property type="entry name" value="MurF"/>
    <property type="match status" value="1"/>
</dbReference>
<dbReference type="InterPro" id="IPR036565">
    <property type="entry name" value="Mur-like_cat_sf"/>
</dbReference>
<dbReference type="InterPro" id="IPR004101">
    <property type="entry name" value="Mur_ligase_C"/>
</dbReference>
<dbReference type="InterPro" id="IPR036615">
    <property type="entry name" value="Mur_ligase_C_dom_sf"/>
</dbReference>
<dbReference type="InterPro" id="IPR013221">
    <property type="entry name" value="Mur_ligase_cen"/>
</dbReference>
<dbReference type="InterPro" id="IPR000713">
    <property type="entry name" value="Mur_ligase_N"/>
</dbReference>
<dbReference type="InterPro" id="IPR051046">
    <property type="entry name" value="MurCDEF_CellWall_CoF430Synth"/>
</dbReference>
<dbReference type="InterPro" id="IPR035911">
    <property type="entry name" value="MurE/MurF_N"/>
</dbReference>
<dbReference type="InterPro" id="IPR005863">
    <property type="entry name" value="UDP-N-AcMur_synth"/>
</dbReference>
<dbReference type="NCBIfam" id="TIGR01143">
    <property type="entry name" value="murF"/>
    <property type="match status" value="1"/>
</dbReference>
<dbReference type="PANTHER" id="PTHR43024">
    <property type="entry name" value="UDP-N-ACETYLMURAMOYL-TRIPEPTIDE--D-ALANYL-D-ALANINE LIGASE"/>
    <property type="match status" value="1"/>
</dbReference>
<dbReference type="PANTHER" id="PTHR43024:SF1">
    <property type="entry name" value="UDP-N-ACETYLMURAMOYL-TRIPEPTIDE--D-ALANYL-D-ALANINE LIGASE"/>
    <property type="match status" value="1"/>
</dbReference>
<dbReference type="Pfam" id="PF01225">
    <property type="entry name" value="Mur_ligase"/>
    <property type="match status" value="1"/>
</dbReference>
<dbReference type="Pfam" id="PF02875">
    <property type="entry name" value="Mur_ligase_C"/>
    <property type="match status" value="1"/>
</dbReference>
<dbReference type="Pfam" id="PF08245">
    <property type="entry name" value="Mur_ligase_M"/>
    <property type="match status" value="1"/>
</dbReference>
<dbReference type="SUPFAM" id="SSF53623">
    <property type="entry name" value="MurD-like peptide ligases, catalytic domain"/>
    <property type="match status" value="1"/>
</dbReference>
<dbReference type="SUPFAM" id="SSF53244">
    <property type="entry name" value="MurD-like peptide ligases, peptide-binding domain"/>
    <property type="match status" value="1"/>
</dbReference>
<dbReference type="SUPFAM" id="SSF63418">
    <property type="entry name" value="MurE/MurF N-terminal domain"/>
    <property type="match status" value="1"/>
</dbReference>
<keyword id="KW-0067">ATP-binding</keyword>
<keyword id="KW-0131">Cell cycle</keyword>
<keyword id="KW-0132">Cell division</keyword>
<keyword id="KW-0133">Cell shape</keyword>
<keyword id="KW-0961">Cell wall biogenesis/degradation</keyword>
<keyword id="KW-0963">Cytoplasm</keyword>
<keyword id="KW-0436">Ligase</keyword>
<keyword id="KW-0547">Nucleotide-binding</keyword>
<keyword id="KW-0573">Peptidoglycan synthesis</keyword>
<keyword id="KW-1185">Reference proteome</keyword>
<sequence length="454" mass="48297">MNSKLSLFDIRTFLESCLLSVTNLSEDIRINNICTDTRSLVSGDLFLALRGESFDGHSFIPQALTAGAIAVVTDRPVEGLGETVAQFLVEDTLVAYQHIAAGWRQRFTIPIIGVTGSVGKTTTKELIAAVLSQFGNVHKTRANYNNEIGVPKTLLELSPDHDFAIVEMAMRGRGQIALLADIAKPTIGLITNVGTAHIGLLGSELAIAEAKCELLAHQPPESTAILNRDNALLMETAQRFWQGKTITYGLEGGDVHGTVDGENLILDGVSLPLPLAGVHNASNYLAAIALAQCLGLDWQQLQSGLTVELPKGRARRYQWGQDVVLLDETYNDGLESMLASLDLLANTPGKRRLAVLGAMKELGDYGPTFHQRVGAKVKALGLDGLFLLANDPNTDAIAAGANGVETQSFSDGPSLVAALKTTLQPGDRLLFKASNSVGLGAVVSQLLAENPTSV</sequence>
<comment type="function">
    <text evidence="1">Involved in cell wall formation. Catalyzes the final step in the synthesis of UDP-N-acetylmuramoyl-pentapeptide, the precursor of murein.</text>
</comment>
<comment type="catalytic activity">
    <reaction evidence="1">
        <text>D-alanyl-D-alanine + UDP-N-acetyl-alpha-D-muramoyl-L-alanyl-gamma-D-glutamyl-meso-2,6-diaminopimelate + ATP = UDP-N-acetyl-alpha-D-muramoyl-L-alanyl-gamma-D-glutamyl-meso-2,6-diaminopimeloyl-D-alanyl-D-alanine + ADP + phosphate + H(+)</text>
        <dbReference type="Rhea" id="RHEA:28374"/>
        <dbReference type="ChEBI" id="CHEBI:15378"/>
        <dbReference type="ChEBI" id="CHEBI:30616"/>
        <dbReference type="ChEBI" id="CHEBI:43474"/>
        <dbReference type="ChEBI" id="CHEBI:57822"/>
        <dbReference type="ChEBI" id="CHEBI:61386"/>
        <dbReference type="ChEBI" id="CHEBI:83905"/>
        <dbReference type="ChEBI" id="CHEBI:456216"/>
        <dbReference type="EC" id="6.3.2.10"/>
    </reaction>
</comment>
<comment type="pathway">
    <text evidence="1">Cell wall biogenesis; peptidoglycan biosynthesis.</text>
</comment>
<comment type="subcellular location">
    <subcellularLocation>
        <location evidence="1">Cytoplasm</location>
    </subcellularLocation>
</comment>
<comment type="similarity">
    <text evidence="1">Belongs to the MurCDEF family. MurF subfamily.</text>
</comment>